<protein>
    <recommendedName>
        <fullName evidence="1">Small ribosomal subunit protein uS9</fullName>
    </recommendedName>
    <alternativeName>
        <fullName evidence="2">30S ribosomal protein S9</fullName>
    </alternativeName>
</protein>
<gene>
    <name evidence="1" type="primary">rpsI</name>
    <name type="ordered locus">BA_0144</name>
    <name type="ordered locus">GBAA_0144</name>
    <name type="ordered locus">BAS0144</name>
</gene>
<reference key="1">
    <citation type="journal article" date="2003" name="Nature">
        <title>The genome sequence of Bacillus anthracis Ames and comparison to closely related bacteria.</title>
        <authorList>
            <person name="Read T.D."/>
            <person name="Peterson S.N."/>
            <person name="Tourasse N.J."/>
            <person name="Baillie L.W."/>
            <person name="Paulsen I.T."/>
            <person name="Nelson K.E."/>
            <person name="Tettelin H."/>
            <person name="Fouts D.E."/>
            <person name="Eisen J.A."/>
            <person name="Gill S.R."/>
            <person name="Holtzapple E.K."/>
            <person name="Okstad O.A."/>
            <person name="Helgason E."/>
            <person name="Rilstone J."/>
            <person name="Wu M."/>
            <person name="Kolonay J.F."/>
            <person name="Beanan M.J."/>
            <person name="Dodson R.J."/>
            <person name="Brinkac L.M."/>
            <person name="Gwinn M.L."/>
            <person name="DeBoy R.T."/>
            <person name="Madpu R."/>
            <person name="Daugherty S.C."/>
            <person name="Durkin A.S."/>
            <person name="Haft D.H."/>
            <person name="Nelson W.C."/>
            <person name="Peterson J.D."/>
            <person name="Pop M."/>
            <person name="Khouri H.M."/>
            <person name="Radune D."/>
            <person name="Benton J.L."/>
            <person name="Mahamoud Y."/>
            <person name="Jiang L."/>
            <person name="Hance I.R."/>
            <person name="Weidman J.F."/>
            <person name="Berry K.J."/>
            <person name="Plaut R.D."/>
            <person name="Wolf A.M."/>
            <person name="Watkins K.L."/>
            <person name="Nierman W.C."/>
            <person name="Hazen A."/>
            <person name="Cline R.T."/>
            <person name="Redmond C."/>
            <person name="Thwaite J.E."/>
            <person name="White O."/>
            <person name="Salzberg S.L."/>
            <person name="Thomason B."/>
            <person name="Friedlander A.M."/>
            <person name="Koehler T.M."/>
            <person name="Hanna P.C."/>
            <person name="Kolstoe A.-B."/>
            <person name="Fraser C.M."/>
        </authorList>
    </citation>
    <scope>NUCLEOTIDE SEQUENCE [LARGE SCALE GENOMIC DNA]</scope>
    <source>
        <strain>Ames / isolate Porton</strain>
    </source>
</reference>
<reference key="2">
    <citation type="journal article" date="2009" name="J. Bacteriol.">
        <title>The complete genome sequence of Bacillus anthracis Ames 'Ancestor'.</title>
        <authorList>
            <person name="Ravel J."/>
            <person name="Jiang L."/>
            <person name="Stanley S.T."/>
            <person name="Wilson M.R."/>
            <person name="Decker R.S."/>
            <person name="Read T.D."/>
            <person name="Worsham P."/>
            <person name="Keim P.S."/>
            <person name="Salzberg S.L."/>
            <person name="Fraser-Liggett C.M."/>
            <person name="Rasko D.A."/>
        </authorList>
    </citation>
    <scope>NUCLEOTIDE SEQUENCE [LARGE SCALE GENOMIC DNA]</scope>
    <source>
        <strain>Ames ancestor</strain>
    </source>
</reference>
<reference key="3">
    <citation type="submission" date="2004-01" db="EMBL/GenBank/DDBJ databases">
        <title>Complete genome sequence of Bacillus anthracis Sterne.</title>
        <authorList>
            <person name="Brettin T.S."/>
            <person name="Bruce D."/>
            <person name="Challacombe J.F."/>
            <person name="Gilna P."/>
            <person name="Han C."/>
            <person name="Hill K."/>
            <person name="Hitchcock P."/>
            <person name="Jackson P."/>
            <person name="Keim P."/>
            <person name="Longmire J."/>
            <person name="Lucas S."/>
            <person name="Okinaka R."/>
            <person name="Richardson P."/>
            <person name="Rubin E."/>
            <person name="Tice H."/>
        </authorList>
    </citation>
    <scope>NUCLEOTIDE SEQUENCE [LARGE SCALE GENOMIC DNA]</scope>
    <source>
        <strain>Sterne</strain>
    </source>
</reference>
<proteinExistence type="inferred from homology"/>
<accession>Q81VP8</accession>
<accession>Q6I4Q0</accession>
<accession>Q6KYE7</accession>
<dbReference type="EMBL" id="AE016879">
    <property type="protein sequence ID" value="AAP24197.1"/>
    <property type="molecule type" value="Genomic_DNA"/>
</dbReference>
<dbReference type="EMBL" id="AE017334">
    <property type="protein sequence ID" value="AAT29224.1"/>
    <property type="molecule type" value="Genomic_DNA"/>
</dbReference>
<dbReference type="EMBL" id="AE017225">
    <property type="protein sequence ID" value="AAT52481.1"/>
    <property type="molecule type" value="Genomic_DNA"/>
</dbReference>
<dbReference type="RefSeq" id="NP_842711.1">
    <property type="nucleotide sequence ID" value="NC_003997.3"/>
</dbReference>
<dbReference type="RefSeq" id="WP_000079988.1">
    <property type="nucleotide sequence ID" value="NZ_WXXJ01000051.1"/>
</dbReference>
<dbReference type="RefSeq" id="YP_026430.1">
    <property type="nucleotide sequence ID" value="NC_005945.1"/>
</dbReference>
<dbReference type="SMR" id="Q81VP8"/>
<dbReference type="STRING" id="261594.GBAA_0144"/>
<dbReference type="DNASU" id="1086438"/>
<dbReference type="GeneID" id="45020189"/>
<dbReference type="KEGG" id="ban:BA_0144"/>
<dbReference type="KEGG" id="banh:HYU01_00775"/>
<dbReference type="KEGG" id="bar:GBAA_0144"/>
<dbReference type="KEGG" id="bat:BAS0144"/>
<dbReference type="PATRIC" id="fig|198094.11.peg.141"/>
<dbReference type="eggNOG" id="COG0103">
    <property type="taxonomic scope" value="Bacteria"/>
</dbReference>
<dbReference type="HOGENOM" id="CLU_046483_2_1_9"/>
<dbReference type="OMA" id="KFQFSKR"/>
<dbReference type="OrthoDB" id="9803965at2"/>
<dbReference type="Proteomes" id="UP000000427">
    <property type="component" value="Chromosome"/>
</dbReference>
<dbReference type="Proteomes" id="UP000000594">
    <property type="component" value="Chromosome"/>
</dbReference>
<dbReference type="GO" id="GO:0022627">
    <property type="term" value="C:cytosolic small ribosomal subunit"/>
    <property type="evidence" value="ECO:0007669"/>
    <property type="project" value="TreeGrafter"/>
</dbReference>
<dbReference type="GO" id="GO:0003723">
    <property type="term" value="F:RNA binding"/>
    <property type="evidence" value="ECO:0007669"/>
    <property type="project" value="TreeGrafter"/>
</dbReference>
<dbReference type="GO" id="GO:0003735">
    <property type="term" value="F:structural constituent of ribosome"/>
    <property type="evidence" value="ECO:0007669"/>
    <property type="project" value="InterPro"/>
</dbReference>
<dbReference type="GO" id="GO:0006412">
    <property type="term" value="P:translation"/>
    <property type="evidence" value="ECO:0007669"/>
    <property type="project" value="UniProtKB-UniRule"/>
</dbReference>
<dbReference type="FunFam" id="3.30.230.10:FF:000001">
    <property type="entry name" value="30S ribosomal protein S9"/>
    <property type="match status" value="1"/>
</dbReference>
<dbReference type="Gene3D" id="3.30.230.10">
    <property type="match status" value="1"/>
</dbReference>
<dbReference type="HAMAP" id="MF_00532_B">
    <property type="entry name" value="Ribosomal_uS9_B"/>
    <property type="match status" value="1"/>
</dbReference>
<dbReference type="InterPro" id="IPR020568">
    <property type="entry name" value="Ribosomal_Su5_D2-typ_SF"/>
</dbReference>
<dbReference type="InterPro" id="IPR000754">
    <property type="entry name" value="Ribosomal_uS9"/>
</dbReference>
<dbReference type="InterPro" id="IPR023035">
    <property type="entry name" value="Ribosomal_uS9_bac/plastid"/>
</dbReference>
<dbReference type="InterPro" id="IPR020574">
    <property type="entry name" value="Ribosomal_uS9_CS"/>
</dbReference>
<dbReference type="InterPro" id="IPR014721">
    <property type="entry name" value="Ribsml_uS5_D2-typ_fold_subgr"/>
</dbReference>
<dbReference type="NCBIfam" id="NF001099">
    <property type="entry name" value="PRK00132.1"/>
    <property type="match status" value="1"/>
</dbReference>
<dbReference type="PANTHER" id="PTHR21569">
    <property type="entry name" value="RIBOSOMAL PROTEIN S9"/>
    <property type="match status" value="1"/>
</dbReference>
<dbReference type="PANTHER" id="PTHR21569:SF1">
    <property type="entry name" value="SMALL RIBOSOMAL SUBUNIT PROTEIN US9M"/>
    <property type="match status" value="1"/>
</dbReference>
<dbReference type="Pfam" id="PF00380">
    <property type="entry name" value="Ribosomal_S9"/>
    <property type="match status" value="1"/>
</dbReference>
<dbReference type="SUPFAM" id="SSF54211">
    <property type="entry name" value="Ribosomal protein S5 domain 2-like"/>
    <property type="match status" value="1"/>
</dbReference>
<dbReference type="PROSITE" id="PS00360">
    <property type="entry name" value="RIBOSOMAL_S9"/>
    <property type="match status" value="1"/>
</dbReference>
<feature type="chain" id="PRO_0000111322" description="Small ribosomal subunit protein uS9">
    <location>
        <begin position="1"/>
        <end position="130"/>
    </location>
</feature>
<comment type="similarity">
    <text evidence="1">Belongs to the universal ribosomal protein uS9 family.</text>
</comment>
<keyword id="KW-1185">Reference proteome</keyword>
<keyword id="KW-0687">Ribonucleoprotein</keyword>
<keyword id="KW-0689">Ribosomal protein</keyword>
<sequence length="130" mass="14481">MAQVQYYGTGRRKSSVARVRLVSGEGRVIINGRDFENYIPFAALREVVKQPLVATETLGNYDVLVNVNGGGYTGQAGAIRHGISRALLKADPEYRLTLKRAGLLTRDARMKERKKYGLKGARRAPQFSKR</sequence>
<name>RS9_BACAN</name>
<evidence type="ECO:0000255" key="1">
    <source>
        <dbReference type="HAMAP-Rule" id="MF_00532"/>
    </source>
</evidence>
<evidence type="ECO:0000305" key="2"/>
<organism>
    <name type="scientific">Bacillus anthracis</name>
    <dbReference type="NCBI Taxonomy" id="1392"/>
    <lineage>
        <taxon>Bacteria</taxon>
        <taxon>Bacillati</taxon>
        <taxon>Bacillota</taxon>
        <taxon>Bacilli</taxon>
        <taxon>Bacillales</taxon>
        <taxon>Bacillaceae</taxon>
        <taxon>Bacillus</taxon>
        <taxon>Bacillus cereus group</taxon>
    </lineage>
</organism>